<comment type="function">
    <text evidence="1">Component of the small ribosomal subunit. The ribosome is a large ribonucleoprotein complex responsible for the synthesis of proteins in the cell. Part of the small subunit (SSU) processome, first precursor of the small eukaryotic ribosomal subunit. During the assembly of the SSU processome in the nucleolus, many ribosome biogenesis factors, an RNA chaperone and ribosomal proteins associate with the nascent pre-rRNA and work in concert to generate RNA folding, modifications, rearrangements and cleavage as well as targeted degradation of pre-ribosomal RNA by the RNA exosome.</text>
</comment>
<comment type="subunit">
    <text evidence="1">Component of the small ribosomal subunit. Identified in a IGF2BP1-dependent mRNP granule complex containing untranslated mRNAs. Part of the small subunit (SSU) processome, composed of more than 70 proteins and the RNA chaperone small nucleolar RNA (snoRNA) U3.</text>
</comment>
<comment type="subcellular location">
    <subcellularLocation>
        <location evidence="1">Cytoplasm</location>
    </subcellularLocation>
    <subcellularLocation>
        <location evidence="1">Nucleus</location>
        <location evidence="1">Nucleolus</location>
    </subcellularLocation>
    <text evidence="1">Localized in cytoplasmic mRNP granules containing untranslated mRNAs.</text>
</comment>
<comment type="similarity">
    <text evidence="4">Belongs to the universal ribosomal protein uS4 family.</text>
</comment>
<proteinExistence type="evidence at transcript level"/>
<dbReference type="EMBL" id="F14517">
    <property type="protein sequence ID" value="CAA23101.1"/>
    <property type="molecule type" value="mRNA"/>
</dbReference>
<dbReference type="STRING" id="9823.ENSSSCP00000022609"/>
<dbReference type="GlyGen" id="Q29197">
    <property type="glycosylation" value="1 site"/>
</dbReference>
<dbReference type="PeptideAtlas" id="Q29197"/>
<dbReference type="InParanoid" id="Q29197"/>
<dbReference type="Proteomes" id="UP000008227">
    <property type="component" value="Unplaced"/>
</dbReference>
<dbReference type="Proteomes" id="UP000314985">
    <property type="component" value="Unplaced"/>
</dbReference>
<dbReference type="Proteomes" id="UP000694570">
    <property type="component" value="Unplaced"/>
</dbReference>
<dbReference type="Proteomes" id="UP000694571">
    <property type="component" value="Unplaced"/>
</dbReference>
<dbReference type="Proteomes" id="UP000694720">
    <property type="component" value="Unplaced"/>
</dbReference>
<dbReference type="Proteomes" id="UP000694722">
    <property type="component" value="Unplaced"/>
</dbReference>
<dbReference type="Proteomes" id="UP000694723">
    <property type="component" value="Unplaced"/>
</dbReference>
<dbReference type="Proteomes" id="UP000694724">
    <property type="component" value="Unplaced"/>
</dbReference>
<dbReference type="Proteomes" id="UP000694725">
    <property type="component" value="Unplaced"/>
</dbReference>
<dbReference type="Proteomes" id="UP000694726">
    <property type="component" value="Unplaced"/>
</dbReference>
<dbReference type="Proteomes" id="UP000694727">
    <property type="component" value="Unplaced"/>
</dbReference>
<dbReference type="Proteomes" id="UP000694728">
    <property type="component" value="Unplaced"/>
</dbReference>
<dbReference type="GO" id="GO:0022627">
    <property type="term" value="C:cytosolic small ribosomal subunit"/>
    <property type="evidence" value="ECO:0000318"/>
    <property type="project" value="GO_Central"/>
</dbReference>
<dbReference type="GO" id="GO:0005730">
    <property type="term" value="C:nucleolus"/>
    <property type="evidence" value="ECO:0007669"/>
    <property type="project" value="UniProtKB-SubCell"/>
</dbReference>
<dbReference type="GO" id="GO:1990904">
    <property type="term" value="C:ribonucleoprotein complex"/>
    <property type="evidence" value="ECO:0000250"/>
    <property type="project" value="UniProtKB"/>
</dbReference>
<dbReference type="GO" id="GO:0032040">
    <property type="term" value="C:small-subunit processome"/>
    <property type="evidence" value="ECO:0000250"/>
    <property type="project" value="UniProtKB"/>
</dbReference>
<dbReference type="GO" id="GO:0019843">
    <property type="term" value="F:rRNA binding"/>
    <property type="evidence" value="ECO:0000318"/>
    <property type="project" value="GO_Central"/>
</dbReference>
<dbReference type="GO" id="GO:0003735">
    <property type="term" value="F:structural constituent of ribosome"/>
    <property type="evidence" value="ECO:0000318"/>
    <property type="project" value="GO_Central"/>
</dbReference>
<dbReference type="GO" id="GO:0042274">
    <property type="term" value="P:ribosomal small subunit biogenesis"/>
    <property type="evidence" value="ECO:0000250"/>
    <property type="project" value="UniProtKB"/>
</dbReference>
<dbReference type="GO" id="GO:0006412">
    <property type="term" value="P:translation"/>
    <property type="evidence" value="ECO:0007669"/>
    <property type="project" value="InterPro"/>
</dbReference>
<dbReference type="InterPro" id="IPR022801">
    <property type="entry name" value="Ribosomal_uS4"/>
</dbReference>
<dbReference type="InterPro" id="IPR005710">
    <property type="entry name" value="Ribosomal_uS4_euk/arc"/>
</dbReference>
<dbReference type="InterPro" id="IPR001912">
    <property type="entry name" value="Ribosomal_uS4_N"/>
</dbReference>
<dbReference type="NCBIfam" id="TIGR01018">
    <property type="entry name" value="uS4_arch"/>
    <property type="match status" value="1"/>
</dbReference>
<dbReference type="PANTHER" id="PTHR11831">
    <property type="entry name" value="30S 40S RIBOSOMAL PROTEIN"/>
    <property type="match status" value="1"/>
</dbReference>
<dbReference type="PANTHER" id="PTHR11831:SF46">
    <property type="entry name" value="SMALL RIBOSOMAL SUBUNIT PROTEIN US4"/>
    <property type="match status" value="1"/>
</dbReference>
<dbReference type="Pfam" id="PF00163">
    <property type="entry name" value="Ribosomal_S4"/>
    <property type="match status" value="1"/>
</dbReference>
<dbReference type="SMART" id="SM01390">
    <property type="entry name" value="Ribosomal_S4"/>
    <property type="match status" value="1"/>
</dbReference>
<dbReference type="SUPFAM" id="SSF55174">
    <property type="entry name" value="Alpha-L RNA-binding motif"/>
    <property type="match status" value="1"/>
</dbReference>
<dbReference type="PROSITE" id="PS00632">
    <property type="entry name" value="RIBOSOMAL_S4"/>
    <property type="match status" value="1"/>
</dbReference>
<reference key="1">
    <citation type="journal article" date="1996" name="Mamm. Genome">
        <title>Evaluation and characterization of a porcine small intestine cDNA library: analysis of 839 clones.</title>
        <authorList>
            <person name="Winteroe A.K."/>
            <person name="Fredholm M."/>
            <person name="Davies W."/>
        </authorList>
    </citation>
    <scope>NUCLEOTIDE SEQUENCE [LARGE SCALE MRNA]</scope>
    <source>
        <tissue>Small intestine</tissue>
    </source>
</reference>
<gene>
    <name type="primary">RPS9</name>
</gene>
<evidence type="ECO:0000250" key="1">
    <source>
        <dbReference type="UniProtKB" id="P46781"/>
    </source>
</evidence>
<evidence type="ECO:0000250" key="2">
    <source>
        <dbReference type="UniProtKB" id="Q6ZWN5"/>
    </source>
</evidence>
<evidence type="ECO:0000255" key="3">
    <source>
        <dbReference type="PROSITE-ProRule" id="PRU00182"/>
    </source>
</evidence>
<evidence type="ECO:0000305" key="4"/>
<protein>
    <recommendedName>
        <fullName evidence="4">Small ribosomal subunit protein uS4</fullName>
    </recommendedName>
    <alternativeName>
        <fullName>40S ribosomal protein S9</fullName>
    </alternativeName>
</protein>
<name>RS9_PIG</name>
<feature type="chain" id="PRO_0000132691" description="Small ribosomal subunit protein uS4">
    <location>
        <begin position="1" status="less than"/>
        <end position="130" status="greater than"/>
    </location>
</feature>
<feature type="domain" description="S4 RNA-binding" evidence="3">
    <location>
        <begin position="106"/>
        <end position="130" status="greater than"/>
    </location>
</feature>
<feature type="modified residue" description="N6-acetyllysine" evidence="2">
    <location>
        <position position="64"/>
    </location>
</feature>
<feature type="modified residue" description="N6-acetyllysine" evidence="2">
    <location>
        <position position="114"/>
    </location>
</feature>
<feature type="cross-link" description="Glycyl lysine isopeptide (Lys-Gly) (interchain with G-Cter in SUMO2)" evidence="1">
    <location>
        <position position="91"/>
    </location>
</feature>
<feature type="non-terminal residue">
    <location>
        <position position="1"/>
    </location>
</feature>
<feature type="non-terminal residue">
    <location>
        <position position="130"/>
    </location>
</feature>
<accession>Q29197</accession>
<sequence>VARSWVCRKTYVTPRRPFEKSRLDQELKLIGEYGLRNKREVWRVKFTLAKIRKAARELLTLDEKDPRRLFEGNALLRRLVRIGVLDEGKMKLDYILGLKIEDFLERRLQTQVFKLGLAXSIHHXRVLIRQ</sequence>
<organism>
    <name type="scientific">Sus scrofa</name>
    <name type="common">Pig</name>
    <dbReference type="NCBI Taxonomy" id="9823"/>
    <lineage>
        <taxon>Eukaryota</taxon>
        <taxon>Metazoa</taxon>
        <taxon>Chordata</taxon>
        <taxon>Craniata</taxon>
        <taxon>Vertebrata</taxon>
        <taxon>Euteleostomi</taxon>
        <taxon>Mammalia</taxon>
        <taxon>Eutheria</taxon>
        <taxon>Laurasiatheria</taxon>
        <taxon>Artiodactyla</taxon>
        <taxon>Suina</taxon>
        <taxon>Suidae</taxon>
        <taxon>Sus</taxon>
    </lineage>
</organism>
<keyword id="KW-0007">Acetylation</keyword>
<keyword id="KW-0963">Cytoplasm</keyword>
<keyword id="KW-1017">Isopeptide bond</keyword>
<keyword id="KW-0539">Nucleus</keyword>
<keyword id="KW-1185">Reference proteome</keyword>
<keyword id="KW-0687">Ribonucleoprotein</keyword>
<keyword id="KW-0689">Ribosomal protein</keyword>
<keyword id="KW-0694">RNA-binding</keyword>
<keyword id="KW-0699">rRNA-binding</keyword>
<keyword id="KW-0832">Ubl conjugation</keyword>